<proteinExistence type="uncertain"/>
<evidence type="ECO:0000255" key="1">
    <source>
        <dbReference type="PROSITE-ProRule" id="PRU00277"/>
    </source>
</evidence>
<evidence type="ECO:0000255" key="2">
    <source>
        <dbReference type="PROSITE-ProRule" id="PRU00448"/>
    </source>
</evidence>
<evidence type="ECO:0000305" key="3"/>
<feature type="chain" id="PRO_0000309478" description="Putative FK506-binding protein 9-like protein">
    <location>
        <begin position="1"/>
        <end position="142"/>
    </location>
</feature>
<feature type="domain" description="PPIase FKBP-type" evidence="1">
    <location>
        <begin position="1"/>
        <end position="49"/>
    </location>
</feature>
<feature type="domain" description="EF-hand 1" evidence="2">
    <location>
        <begin position="60"/>
        <end position="95"/>
    </location>
</feature>
<feature type="domain" description="EF-hand 2" evidence="2">
    <location>
        <begin position="105"/>
        <end position="140"/>
    </location>
</feature>
<feature type="binding site" evidence="2">
    <location>
        <position position="118"/>
    </location>
    <ligand>
        <name>Ca(2+)</name>
        <dbReference type="ChEBI" id="CHEBI:29108"/>
    </ligand>
</feature>
<feature type="binding site" evidence="2">
    <location>
        <position position="120"/>
    </location>
    <ligand>
        <name>Ca(2+)</name>
        <dbReference type="ChEBI" id="CHEBI:29108"/>
    </ligand>
</feature>
<feature type="binding site" evidence="2">
    <location>
        <position position="122"/>
    </location>
    <ligand>
        <name>Ca(2+)</name>
        <dbReference type="ChEBI" id="CHEBI:29108"/>
    </ligand>
</feature>
<feature type="binding site" evidence="2">
    <location>
        <position position="124"/>
    </location>
    <ligand>
        <name>Ca(2+)</name>
        <dbReference type="ChEBI" id="CHEBI:29108"/>
    </ligand>
</feature>
<feature type="binding site" evidence="2">
    <location>
        <position position="129"/>
    </location>
    <ligand>
        <name>Ca(2+)</name>
        <dbReference type="ChEBI" id="CHEBI:29108"/>
    </ligand>
</feature>
<feature type="sequence variant" id="VAR_036962" description="In dbSNP:rs11524166.">
    <original>V</original>
    <variation>G</variation>
    <location>
        <position position="125"/>
    </location>
</feature>
<organism>
    <name type="scientific">Homo sapiens</name>
    <name type="common">Human</name>
    <dbReference type="NCBI Taxonomy" id="9606"/>
    <lineage>
        <taxon>Eukaryota</taxon>
        <taxon>Metazoa</taxon>
        <taxon>Chordata</taxon>
        <taxon>Craniata</taxon>
        <taxon>Vertebrata</taxon>
        <taxon>Euteleostomi</taxon>
        <taxon>Mammalia</taxon>
        <taxon>Eutheria</taxon>
        <taxon>Euarchontoglires</taxon>
        <taxon>Primates</taxon>
        <taxon>Haplorrhini</taxon>
        <taxon>Catarrhini</taxon>
        <taxon>Hominidae</taxon>
        <taxon>Homo</taxon>
    </lineage>
</organism>
<dbReference type="EMBL" id="AK312981">
    <property type="protein sequence ID" value="BAG35818.1"/>
    <property type="molecule type" value="mRNA"/>
</dbReference>
<dbReference type="EMBL" id="AC091812">
    <property type="protein sequence ID" value="AAQ93369.1"/>
    <property type="molecule type" value="Genomic_DNA"/>
</dbReference>
<dbReference type="EMBL" id="BC011872">
    <property type="status" value="NOT_ANNOTATED_CDS"/>
    <property type="molecule type" value="mRNA"/>
</dbReference>
<dbReference type="SMR" id="Q75LS8"/>
<dbReference type="iPTMnet" id="Q75LS8"/>
<dbReference type="PhosphoSitePlus" id="Q75LS8"/>
<dbReference type="BioMuta" id="HGNC:23568"/>
<dbReference type="DMDM" id="74758923"/>
<dbReference type="jPOST" id="Q75LS8"/>
<dbReference type="MassIVE" id="Q75LS8"/>
<dbReference type="PeptideAtlas" id="Q75LS8"/>
<dbReference type="AGR" id="HGNC:23568"/>
<dbReference type="GeneCards" id="FKBP9P1"/>
<dbReference type="HGNC" id="HGNC:23568">
    <property type="gene designation" value="FKBP9P1"/>
</dbReference>
<dbReference type="neXtProt" id="NX_Q75LS8"/>
<dbReference type="InParanoid" id="Q75LS8"/>
<dbReference type="PAN-GO" id="Q75LS8">
    <property type="GO annotations" value="0 GO annotations based on evolutionary models"/>
</dbReference>
<dbReference type="PhylomeDB" id="Q75LS8"/>
<dbReference type="PathwayCommons" id="Q75LS8"/>
<dbReference type="Pharos" id="Q75LS8">
    <property type="development level" value="Tdark"/>
</dbReference>
<dbReference type="Proteomes" id="UP000005640">
    <property type="component" value="Unplaced"/>
</dbReference>
<dbReference type="RNAct" id="Q75LS8">
    <property type="molecule type" value="protein"/>
</dbReference>
<dbReference type="GO" id="GO:0005783">
    <property type="term" value="C:endoplasmic reticulum"/>
    <property type="evidence" value="ECO:0007669"/>
    <property type="project" value="UniProtKB-ARBA"/>
</dbReference>
<dbReference type="GO" id="GO:0005509">
    <property type="term" value="F:calcium ion binding"/>
    <property type="evidence" value="ECO:0007669"/>
    <property type="project" value="InterPro"/>
</dbReference>
<dbReference type="GO" id="GO:0003755">
    <property type="term" value="F:peptidyl-prolyl cis-trans isomerase activity"/>
    <property type="evidence" value="ECO:0007669"/>
    <property type="project" value="InterPro"/>
</dbReference>
<dbReference type="FunFam" id="1.10.238.10:FF:000102">
    <property type="entry name" value="Peptidylprolyl isomerase"/>
    <property type="match status" value="1"/>
</dbReference>
<dbReference type="Gene3D" id="3.10.50.40">
    <property type="match status" value="1"/>
</dbReference>
<dbReference type="Gene3D" id="1.10.238.10">
    <property type="entry name" value="EF-hand"/>
    <property type="match status" value="1"/>
</dbReference>
<dbReference type="InterPro" id="IPR011992">
    <property type="entry name" value="EF-hand-dom_pair"/>
</dbReference>
<dbReference type="InterPro" id="IPR018247">
    <property type="entry name" value="EF_Hand_1_Ca_BS"/>
</dbReference>
<dbReference type="InterPro" id="IPR002048">
    <property type="entry name" value="EF_hand_dom"/>
</dbReference>
<dbReference type="InterPro" id="IPR051989">
    <property type="entry name" value="FKBP-like_isomerase"/>
</dbReference>
<dbReference type="InterPro" id="IPR046357">
    <property type="entry name" value="PPIase_dom_sf"/>
</dbReference>
<dbReference type="InterPro" id="IPR001179">
    <property type="entry name" value="PPIase_FKBP_dom"/>
</dbReference>
<dbReference type="PANTHER" id="PTHR46046:SF2">
    <property type="entry name" value="PEPTIDYL-PROLYL CIS-TRANS ISOMERASE FKBP9"/>
    <property type="match status" value="1"/>
</dbReference>
<dbReference type="PANTHER" id="PTHR46046">
    <property type="entry name" value="PEPTIDYLPROLYL ISOMERASE"/>
    <property type="match status" value="1"/>
</dbReference>
<dbReference type="Pfam" id="PF13202">
    <property type="entry name" value="EF-hand_5"/>
    <property type="match status" value="1"/>
</dbReference>
<dbReference type="Pfam" id="PF00254">
    <property type="entry name" value="FKBP_C"/>
    <property type="match status" value="1"/>
</dbReference>
<dbReference type="SMART" id="SM00054">
    <property type="entry name" value="EFh"/>
    <property type="match status" value="2"/>
</dbReference>
<dbReference type="SUPFAM" id="SSF47473">
    <property type="entry name" value="EF-hand"/>
    <property type="match status" value="1"/>
</dbReference>
<dbReference type="SUPFAM" id="SSF54534">
    <property type="entry name" value="FKBP-like"/>
    <property type="match status" value="1"/>
</dbReference>
<dbReference type="PROSITE" id="PS00018">
    <property type="entry name" value="EF_HAND_1"/>
    <property type="match status" value="1"/>
</dbReference>
<dbReference type="PROSITE" id="PS50222">
    <property type="entry name" value="EF_HAND_2"/>
    <property type="match status" value="2"/>
</dbReference>
<dbReference type="PROSITE" id="PS00014">
    <property type="entry name" value="ER_TARGET"/>
    <property type="match status" value="1"/>
</dbReference>
<dbReference type="PROSITE" id="PS50059">
    <property type="entry name" value="FKBP_PPIASE"/>
    <property type="match status" value="1"/>
</dbReference>
<sequence>MDMGLREMCVGEKRTVIIPPHLGYGEAGVDGEVPGSAVLVFDIELLELVAGLPEGYMFIWNGEVSPNLFEEIDKDGNGEVLLEEFSEYIHAQVASGKGKLAPGFDAELIVKNMFTNQDRNGDGKVTAEEFKLKDQEAKQDEL</sequence>
<accession>Q75LS8</accession>
<accession>B2R7H1</accession>
<keyword id="KW-0106">Calcium</keyword>
<keyword id="KW-0479">Metal-binding</keyword>
<keyword id="KW-1185">Reference proteome</keyword>
<keyword id="KW-0677">Repeat</keyword>
<reference key="1">
    <citation type="journal article" date="2004" name="Nat. Genet.">
        <title>Complete sequencing and characterization of 21,243 full-length human cDNAs.</title>
        <authorList>
            <person name="Ota T."/>
            <person name="Suzuki Y."/>
            <person name="Nishikawa T."/>
            <person name="Otsuki T."/>
            <person name="Sugiyama T."/>
            <person name="Irie R."/>
            <person name="Wakamatsu A."/>
            <person name="Hayashi K."/>
            <person name="Sato H."/>
            <person name="Nagai K."/>
            <person name="Kimura K."/>
            <person name="Makita H."/>
            <person name="Sekine M."/>
            <person name="Obayashi M."/>
            <person name="Nishi T."/>
            <person name="Shibahara T."/>
            <person name="Tanaka T."/>
            <person name="Ishii S."/>
            <person name="Yamamoto J."/>
            <person name="Saito K."/>
            <person name="Kawai Y."/>
            <person name="Isono Y."/>
            <person name="Nakamura Y."/>
            <person name="Nagahari K."/>
            <person name="Murakami K."/>
            <person name="Yasuda T."/>
            <person name="Iwayanagi T."/>
            <person name="Wagatsuma M."/>
            <person name="Shiratori A."/>
            <person name="Sudo H."/>
            <person name="Hosoiri T."/>
            <person name="Kaku Y."/>
            <person name="Kodaira H."/>
            <person name="Kondo H."/>
            <person name="Sugawara M."/>
            <person name="Takahashi M."/>
            <person name="Kanda K."/>
            <person name="Yokoi T."/>
            <person name="Furuya T."/>
            <person name="Kikkawa E."/>
            <person name="Omura Y."/>
            <person name="Abe K."/>
            <person name="Kamihara K."/>
            <person name="Katsuta N."/>
            <person name="Sato K."/>
            <person name="Tanikawa M."/>
            <person name="Yamazaki M."/>
            <person name="Ninomiya K."/>
            <person name="Ishibashi T."/>
            <person name="Yamashita H."/>
            <person name="Murakawa K."/>
            <person name="Fujimori K."/>
            <person name="Tanai H."/>
            <person name="Kimata M."/>
            <person name="Watanabe M."/>
            <person name="Hiraoka S."/>
            <person name="Chiba Y."/>
            <person name="Ishida S."/>
            <person name="Ono Y."/>
            <person name="Takiguchi S."/>
            <person name="Watanabe S."/>
            <person name="Yosida M."/>
            <person name="Hotuta T."/>
            <person name="Kusano J."/>
            <person name="Kanehori K."/>
            <person name="Takahashi-Fujii A."/>
            <person name="Hara H."/>
            <person name="Tanase T.-O."/>
            <person name="Nomura Y."/>
            <person name="Togiya S."/>
            <person name="Komai F."/>
            <person name="Hara R."/>
            <person name="Takeuchi K."/>
            <person name="Arita M."/>
            <person name="Imose N."/>
            <person name="Musashino K."/>
            <person name="Yuuki H."/>
            <person name="Oshima A."/>
            <person name="Sasaki N."/>
            <person name="Aotsuka S."/>
            <person name="Yoshikawa Y."/>
            <person name="Matsunawa H."/>
            <person name="Ichihara T."/>
            <person name="Shiohata N."/>
            <person name="Sano S."/>
            <person name="Moriya S."/>
            <person name="Momiyama H."/>
            <person name="Satoh N."/>
            <person name="Takami S."/>
            <person name="Terashima Y."/>
            <person name="Suzuki O."/>
            <person name="Nakagawa S."/>
            <person name="Senoh A."/>
            <person name="Mizoguchi H."/>
            <person name="Goto Y."/>
            <person name="Shimizu F."/>
            <person name="Wakebe H."/>
            <person name="Hishigaki H."/>
            <person name="Watanabe T."/>
            <person name="Sugiyama A."/>
            <person name="Takemoto M."/>
            <person name="Kawakami B."/>
            <person name="Yamazaki M."/>
            <person name="Watanabe K."/>
            <person name="Kumagai A."/>
            <person name="Itakura S."/>
            <person name="Fukuzumi Y."/>
            <person name="Fujimori Y."/>
            <person name="Komiyama M."/>
            <person name="Tashiro H."/>
            <person name="Tanigami A."/>
            <person name="Fujiwara T."/>
            <person name="Ono T."/>
            <person name="Yamada K."/>
            <person name="Fujii Y."/>
            <person name="Ozaki K."/>
            <person name="Hirao M."/>
            <person name="Ohmori Y."/>
            <person name="Kawabata A."/>
            <person name="Hikiji T."/>
            <person name="Kobatake N."/>
            <person name="Inagaki H."/>
            <person name="Ikema Y."/>
            <person name="Okamoto S."/>
            <person name="Okitani R."/>
            <person name="Kawakami T."/>
            <person name="Noguchi S."/>
            <person name="Itoh T."/>
            <person name="Shigeta K."/>
            <person name="Senba T."/>
            <person name="Matsumura K."/>
            <person name="Nakajima Y."/>
            <person name="Mizuno T."/>
            <person name="Morinaga M."/>
            <person name="Sasaki M."/>
            <person name="Togashi T."/>
            <person name="Oyama M."/>
            <person name="Hata H."/>
            <person name="Watanabe M."/>
            <person name="Komatsu T."/>
            <person name="Mizushima-Sugano J."/>
            <person name="Satoh T."/>
            <person name="Shirai Y."/>
            <person name="Takahashi Y."/>
            <person name="Nakagawa K."/>
            <person name="Okumura K."/>
            <person name="Nagase T."/>
            <person name="Nomura N."/>
            <person name="Kikuchi H."/>
            <person name="Masuho Y."/>
            <person name="Yamashita R."/>
            <person name="Nakai K."/>
            <person name="Yada T."/>
            <person name="Nakamura Y."/>
            <person name="Ohara O."/>
            <person name="Isogai T."/>
            <person name="Sugano S."/>
        </authorList>
    </citation>
    <scope>NUCLEOTIDE SEQUENCE [LARGE SCALE MRNA]</scope>
    <source>
        <tissue>Urinary bladder</tissue>
    </source>
</reference>
<reference key="2">
    <citation type="journal article" date="2003" name="Nature">
        <title>The DNA sequence of human chromosome 7.</title>
        <authorList>
            <person name="Hillier L.W."/>
            <person name="Fulton R.S."/>
            <person name="Fulton L.A."/>
            <person name="Graves T.A."/>
            <person name="Pepin K.H."/>
            <person name="Wagner-McPherson C."/>
            <person name="Layman D."/>
            <person name="Maas J."/>
            <person name="Jaeger S."/>
            <person name="Walker R."/>
            <person name="Wylie K."/>
            <person name="Sekhon M."/>
            <person name="Becker M.C."/>
            <person name="O'Laughlin M.D."/>
            <person name="Schaller M.E."/>
            <person name="Fewell G.A."/>
            <person name="Delehaunty K.D."/>
            <person name="Miner T.L."/>
            <person name="Nash W.E."/>
            <person name="Cordes M."/>
            <person name="Du H."/>
            <person name="Sun H."/>
            <person name="Edwards J."/>
            <person name="Bradshaw-Cordum H."/>
            <person name="Ali J."/>
            <person name="Andrews S."/>
            <person name="Isak A."/>
            <person name="Vanbrunt A."/>
            <person name="Nguyen C."/>
            <person name="Du F."/>
            <person name="Lamar B."/>
            <person name="Courtney L."/>
            <person name="Kalicki J."/>
            <person name="Ozersky P."/>
            <person name="Bielicki L."/>
            <person name="Scott K."/>
            <person name="Holmes A."/>
            <person name="Harkins R."/>
            <person name="Harris A."/>
            <person name="Strong C.M."/>
            <person name="Hou S."/>
            <person name="Tomlinson C."/>
            <person name="Dauphin-Kohlberg S."/>
            <person name="Kozlowicz-Reilly A."/>
            <person name="Leonard S."/>
            <person name="Rohlfing T."/>
            <person name="Rock S.M."/>
            <person name="Tin-Wollam A.-M."/>
            <person name="Abbott A."/>
            <person name="Minx P."/>
            <person name="Maupin R."/>
            <person name="Strowmatt C."/>
            <person name="Latreille P."/>
            <person name="Miller N."/>
            <person name="Johnson D."/>
            <person name="Murray J."/>
            <person name="Woessner J.P."/>
            <person name="Wendl M.C."/>
            <person name="Yang S.-P."/>
            <person name="Schultz B.R."/>
            <person name="Wallis J.W."/>
            <person name="Spieth J."/>
            <person name="Bieri T.A."/>
            <person name="Nelson J.O."/>
            <person name="Berkowicz N."/>
            <person name="Wohldmann P.E."/>
            <person name="Cook L.L."/>
            <person name="Hickenbotham M.T."/>
            <person name="Eldred J."/>
            <person name="Williams D."/>
            <person name="Bedell J.A."/>
            <person name="Mardis E.R."/>
            <person name="Clifton S.W."/>
            <person name="Chissoe S.L."/>
            <person name="Marra M.A."/>
            <person name="Raymond C."/>
            <person name="Haugen E."/>
            <person name="Gillett W."/>
            <person name="Zhou Y."/>
            <person name="James R."/>
            <person name="Phelps K."/>
            <person name="Iadanoto S."/>
            <person name="Bubb K."/>
            <person name="Simms E."/>
            <person name="Levy R."/>
            <person name="Clendenning J."/>
            <person name="Kaul R."/>
            <person name="Kent W.J."/>
            <person name="Furey T.S."/>
            <person name="Baertsch R.A."/>
            <person name="Brent M.R."/>
            <person name="Keibler E."/>
            <person name="Flicek P."/>
            <person name="Bork P."/>
            <person name="Suyama M."/>
            <person name="Bailey J.A."/>
            <person name="Portnoy M.E."/>
            <person name="Torrents D."/>
            <person name="Chinwalla A.T."/>
            <person name="Gish W.R."/>
            <person name="Eddy S.R."/>
            <person name="McPherson J.D."/>
            <person name="Olson M.V."/>
            <person name="Eichler E.E."/>
            <person name="Green E.D."/>
            <person name="Waterston R.H."/>
            <person name="Wilson R.K."/>
        </authorList>
    </citation>
    <scope>NUCLEOTIDE SEQUENCE [LARGE SCALE GENOMIC DNA]</scope>
</reference>
<reference key="3">
    <citation type="journal article" date="2004" name="Genome Res.">
        <title>The status, quality, and expansion of the NIH full-length cDNA project: the Mammalian Gene Collection (MGC).</title>
        <authorList>
            <consortium name="The MGC Project Team"/>
        </authorList>
    </citation>
    <scope>NUCLEOTIDE SEQUENCE [LARGE SCALE MRNA]</scope>
    <source>
        <tissue>Muscle</tissue>
    </source>
</reference>
<comment type="caution">
    <text evidence="3">Could be the product of a pseudogene. The FKBP domain is truncated.</text>
</comment>
<gene>
    <name type="primary">FKBP9P1</name>
    <name type="synonym">FKBP9L</name>
</gene>
<protein>
    <recommendedName>
        <fullName>Putative FK506-binding protein 9-like protein</fullName>
    </recommendedName>
    <alternativeName>
        <fullName>FK506-binding protein 9-like protein pseudogene</fullName>
    </alternativeName>
</protein>
<name>FKB9L_HUMAN</name>